<name>RFCS_ARCFU</name>
<protein>
    <recommendedName>
        <fullName>Replication factor C small subunit</fullName>
        <shortName>RFC small subunit</shortName>
    </recommendedName>
    <alternativeName>
        <fullName>Clamp loader small subunit</fullName>
    </alternativeName>
    <alternativeName>
        <fullName>afRFC small subunit</fullName>
        <shortName>afRFCsm</shortName>
    </alternativeName>
</protein>
<comment type="function">
    <text evidence="2">Part of the RFC clamp loader complex which loads the PCNA sliding clamp onto DNA. The complex possesses DNA-dependent ATPase activity which is further stimulated by PCNA.</text>
</comment>
<comment type="subunit">
    <text evidence="2">Heteropentamer composed of four small subunits (RfcS) and one large subunit (RfcL). Both subunits interact with PCNA.</text>
</comment>
<comment type="similarity">
    <text evidence="3">Belongs to the activator 1 small subunits family. RfcS subfamily.</text>
</comment>
<organism>
    <name type="scientific">Archaeoglobus fulgidus (strain ATCC 49558 / DSM 4304 / JCM 9628 / NBRC 100126 / VC-16)</name>
    <dbReference type="NCBI Taxonomy" id="224325"/>
    <lineage>
        <taxon>Archaea</taxon>
        <taxon>Methanobacteriati</taxon>
        <taxon>Methanobacteriota</taxon>
        <taxon>Archaeoglobi</taxon>
        <taxon>Archaeoglobales</taxon>
        <taxon>Archaeoglobaceae</taxon>
        <taxon>Archaeoglobus</taxon>
    </lineage>
</organism>
<accession>O28219</accession>
<reference key="1">
    <citation type="journal article" date="1997" name="Nature">
        <title>The complete genome sequence of the hyperthermophilic, sulphate-reducing archaeon Archaeoglobus fulgidus.</title>
        <authorList>
            <person name="Klenk H.-P."/>
            <person name="Clayton R.A."/>
            <person name="Tomb J.-F."/>
            <person name="White O."/>
            <person name="Nelson K.E."/>
            <person name="Ketchum K.A."/>
            <person name="Dodson R.J."/>
            <person name="Gwinn M.L."/>
            <person name="Hickey E.K."/>
            <person name="Peterson J.D."/>
            <person name="Richardson D.L."/>
            <person name="Kerlavage A.R."/>
            <person name="Graham D.E."/>
            <person name="Kyrpides N.C."/>
            <person name="Fleischmann R.D."/>
            <person name="Quackenbush J."/>
            <person name="Lee N.H."/>
            <person name="Sutton G.G."/>
            <person name="Gill S.R."/>
            <person name="Kirkness E.F."/>
            <person name="Dougherty B.A."/>
            <person name="McKenney K."/>
            <person name="Adams M.D."/>
            <person name="Loftus B.J."/>
            <person name="Peterson S.N."/>
            <person name="Reich C.I."/>
            <person name="McNeil L.K."/>
            <person name="Badger J.H."/>
            <person name="Glodek A."/>
            <person name="Zhou L."/>
            <person name="Overbeek R."/>
            <person name="Gocayne J.D."/>
            <person name="Weidman J.F."/>
            <person name="McDonald L.A."/>
            <person name="Utterback T.R."/>
            <person name="Cotton M.D."/>
            <person name="Spriggs T."/>
            <person name="Artiach P."/>
            <person name="Kaine B.P."/>
            <person name="Sykes S.M."/>
            <person name="Sadow P.W."/>
            <person name="D'Andrea K.P."/>
            <person name="Bowman C."/>
            <person name="Fujii C."/>
            <person name="Garland S.A."/>
            <person name="Mason T.M."/>
            <person name="Olsen G.J."/>
            <person name="Fraser C.M."/>
            <person name="Smith H.O."/>
            <person name="Woese C.R."/>
            <person name="Venter J.C."/>
        </authorList>
    </citation>
    <scope>NUCLEOTIDE SEQUENCE [LARGE SCALE GENOMIC DNA]</scope>
    <source>
        <strain>ATCC 49558 / DSM 4304 / JCM 9628 / NBRC 100126 / VC-16</strain>
    </source>
</reference>
<reference key="2">
    <citation type="journal article" date="2002" name="Nucleic Acids Res.">
        <title>Biochemical characterisation of the clamp/clamp loader proteins from the euryarchaeon Archaeoglobus fulgidus.</title>
        <authorList>
            <person name="Seybert A."/>
            <person name="Scott D.J."/>
            <person name="Scaife S."/>
            <person name="Singleton M.R."/>
            <person name="Wigley D.B."/>
        </authorList>
    </citation>
    <scope>FUNCTION</scope>
    <scope>SUBUNIT</scope>
</reference>
<keyword id="KW-0002">3D-structure</keyword>
<keyword id="KW-0067">ATP-binding</keyword>
<keyword id="KW-0235">DNA replication</keyword>
<keyword id="KW-0547">Nucleotide-binding</keyword>
<keyword id="KW-1185">Reference proteome</keyword>
<evidence type="ECO:0000255" key="1"/>
<evidence type="ECO:0000269" key="2">
    <source>
    </source>
</evidence>
<evidence type="ECO:0000305" key="3"/>
<evidence type="ECO:0007829" key="4">
    <source>
        <dbReference type="PDB" id="2CHG"/>
    </source>
</evidence>
<evidence type="ECO:0007829" key="5">
    <source>
        <dbReference type="PDB" id="2CHQ"/>
    </source>
</evidence>
<sequence>MENFEIWVEKYRPRTLDEVVGQDEVIQRLKGYVERKNIPHLLFSGPPGTGKTATAIALARDLFGENWRDNFIEMNASDERGIDVVRHKIKEFARTAPIGGAPFKIIFLDEADALTADAQAALRRTMEMYSKSCRFILSCNYVSRIIEPIQSRCAVFRFKPVPKEAMKKRLLEICEKEGVKITEDGLEALIYISGGDFRKAINALQGAAAIGEVVDADTIYQITATARPEEMTELIQTALKGNFMEARELLDRLMVEYGMSGEDIVAQLFREIISMPIKDSLKVQLIDKLGEVDFRLTEGANERIQLDAYLAYLSTLAKK</sequence>
<dbReference type="EMBL" id="AE000782">
    <property type="protein sequence ID" value="AAB89191.1"/>
    <property type="molecule type" value="Genomic_DNA"/>
</dbReference>
<dbReference type="PIR" id="C69507">
    <property type="entry name" value="C69507"/>
</dbReference>
<dbReference type="RefSeq" id="WP_010879552.1">
    <property type="nucleotide sequence ID" value="NC_000917.1"/>
</dbReference>
<dbReference type="PDB" id="2CHG">
    <property type="method" value="X-ray"/>
    <property type="resolution" value="2.10 A"/>
    <property type="chains" value="A/B/C/D=1-226"/>
</dbReference>
<dbReference type="PDB" id="2CHQ">
    <property type="method" value="X-ray"/>
    <property type="resolution" value="3.50 A"/>
    <property type="chains" value="A/B/C=1-319"/>
</dbReference>
<dbReference type="PDB" id="2CHV">
    <property type="method" value="X-ray"/>
    <property type="resolution" value="4.00 A"/>
    <property type="chains" value="A/B/C/D/E/F=1-319"/>
</dbReference>
<dbReference type="PDBsum" id="2CHG"/>
<dbReference type="PDBsum" id="2CHQ"/>
<dbReference type="PDBsum" id="2CHV"/>
<dbReference type="SMR" id="O28219"/>
<dbReference type="STRING" id="224325.AF_2060"/>
<dbReference type="PaxDb" id="224325-AF_2060"/>
<dbReference type="EnsemblBacteria" id="AAB89191">
    <property type="protein sequence ID" value="AAB89191"/>
    <property type="gene ID" value="AF_2060"/>
</dbReference>
<dbReference type="KEGG" id="afu:AF_2060"/>
<dbReference type="eggNOG" id="arCOG00469">
    <property type="taxonomic scope" value="Archaea"/>
</dbReference>
<dbReference type="HOGENOM" id="CLU_042324_1_0_2"/>
<dbReference type="OrthoDB" id="7928at2157"/>
<dbReference type="PhylomeDB" id="O28219"/>
<dbReference type="BRENDA" id="3.6.4.B8">
    <property type="organism ID" value="414"/>
</dbReference>
<dbReference type="EvolutionaryTrace" id="O28219"/>
<dbReference type="Proteomes" id="UP000002199">
    <property type="component" value="Chromosome"/>
</dbReference>
<dbReference type="GO" id="GO:0005663">
    <property type="term" value="C:DNA replication factor C complex"/>
    <property type="evidence" value="ECO:0007669"/>
    <property type="project" value="InterPro"/>
</dbReference>
<dbReference type="GO" id="GO:0005524">
    <property type="term" value="F:ATP binding"/>
    <property type="evidence" value="ECO:0007669"/>
    <property type="project" value="UniProtKB-UniRule"/>
</dbReference>
<dbReference type="GO" id="GO:0016887">
    <property type="term" value="F:ATP hydrolysis activity"/>
    <property type="evidence" value="ECO:0007669"/>
    <property type="project" value="InterPro"/>
</dbReference>
<dbReference type="GO" id="GO:0003677">
    <property type="term" value="F:DNA binding"/>
    <property type="evidence" value="ECO:0007669"/>
    <property type="project" value="InterPro"/>
</dbReference>
<dbReference type="GO" id="GO:0003689">
    <property type="term" value="F:DNA clamp loader activity"/>
    <property type="evidence" value="ECO:0007669"/>
    <property type="project" value="UniProtKB-UniRule"/>
</dbReference>
<dbReference type="GO" id="GO:0006281">
    <property type="term" value="P:DNA repair"/>
    <property type="evidence" value="ECO:0007669"/>
    <property type="project" value="TreeGrafter"/>
</dbReference>
<dbReference type="GO" id="GO:0006261">
    <property type="term" value="P:DNA-templated DNA replication"/>
    <property type="evidence" value="ECO:0007669"/>
    <property type="project" value="TreeGrafter"/>
</dbReference>
<dbReference type="CDD" id="cd00009">
    <property type="entry name" value="AAA"/>
    <property type="match status" value="1"/>
</dbReference>
<dbReference type="CDD" id="cd18140">
    <property type="entry name" value="HLD_clamp_RFC"/>
    <property type="match status" value="1"/>
</dbReference>
<dbReference type="FunFam" id="1.20.272.10:FF:000029">
    <property type="entry name" value="Replication factor C small subunit"/>
    <property type="match status" value="1"/>
</dbReference>
<dbReference type="FunFam" id="1.10.8.60:FF:000012">
    <property type="entry name" value="Replication factor C subunit 4"/>
    <property type="match status" value="1"/>
</dbReference>
<dbReference type="FunFam" id="3.40.50.300:FF:000129">
    <property type="entry name" value="Replication factor C subunit 5"/>
    <property type="match status" value="1"/>
</dbReference>
<dbReference type="Gene3D" id="1.10.8.60">
    <property type="match status" value="1"/>
</dbReference>
<dbReference type="Gene3D" id="1.20.272.10">
    <property type="match status" value="1"/>
</dbReference>
<dbReference type="Gene3D" id="3.40.50.300">
    <property type="entry name" value="P-loop containing nucleotide triphosphate hydrolases"/>
    <property type="match status" value="1"/>
</dbReference>
<dbReference type="HAMAP" id="MF_01509">
    <property type="entry name" value="RfcS"/>
    <property type="match status" value="1"/>
</dbReference>
<dbReference type="InterPro" id="IPR003593">
    <property type="entry name" value="AAA+_ATPase"/>
</dbReference>
<dbReference type="InterPro" id="IPR003959">
    <property type="entry name" value="ATPase_AAA_core"/>
</dbReference>
<dbReference type="InterPro" id="IPR008921">
    <property type="entry name" value="DNA_pol3_clamp-load_cplx_C"/>
</dbReference>
<dbReference type="InterPro" id="IPR050238">
    <property type="entry name" value="DNA_Rep/Repair_Clamp_Loader"/>
</dbReference>
<dbReference type="InterPro" id="IPR027417">
    <property type="entry name" value="P-loop_NTPase"/>
</dbReference>
<dbReference type="InterPro" id="IPR023748">
    <property type="entry name" value="Rep_factor-C_ssu_arc"/>
</dbReference>
<dbReference type="InterPro" id="IPR013748">
    <property type="entry name" value="Rep_factorC_C"/>
</dbReference>
<dbReference type="InterPro" id="IPR047854">
    <property type="entry name" value="RFC_lid"/>
</dbReference>
<dbReference type="NCBIfam" id="NF001679">
    <property type="entry name" value="PRK00440.1"/>
    <property type="match status" value="1"/>
</dbReference>
<dbReference type="PANTHER" id="PTHR11669">
    <property type="entry name" value="REPLICATION FACTOR C / DNA POLYMERASE III GAMMA-TAU SUBUNIT"/>
    <property type="match status" value="1"/>
</dbReference>
<dbReference type="PANTHER" id="PTHR11669:SF20">
    <property type="entry name" value="REPLICATION FACTOR C SUBUNIT 4"/>
    <property type="match status" value="1"/>
</dbReference>
<dbReference type="Pfam" id="PF00004">
    <property type="entry name" value="AAA"/>
    <property type="match status" value="1"/>
</dbReference>
<dbReference type="Pfam" id="PF25361">
    <property type="entry name" value="AAA_lid_RFC1"/>
    <property type="match status" value="1"/>
</dbReference>
<dbReference type="Pfam" id="PF08542">
    <property type="entry name" value="Rep_fac_C"/>
    <property type="match status" value="1"/>
</dbReference>
<dbReference type="SMART" id="SM00382">
    <property type="entry name" value="AAA"/>
    <property type="match status" value="1"/>
</dbReference>
<dbReference type="SUPFAM" id="SSF52540">
    <property type="entry name" value="P-loop containing nucleoside triphosphate hydrolases"/>
    <property type="match status" value="1"/>
</dbReference>
<dbReference type="SUPFAM" id="SSF48019">
    <property type="entry name" value="post-AAA+ oligomerization domain-like"/>
    <property type="match status" value="1"/>
</dbReference>
<feature type="chain" id="PRO_0000135971" description="Replication factor C small subunit">
    <location>
        <begin position="1"/>
        <end position="319"/>
    </location>
</feature>
<feature type="binding site" evidence="1">
    <location>
        <begin position="45"/>
        <end position="52"/>
    </location>
    <ligand>
        <name>ATP</name>
        <dbReference type="ChEBI" id="CHEBI:30616"/>
    </ligand>
</feature>
<feature type="helix" evidence="4">
    <location>
        <begin position="7"/>
        <end position="10"/>
    </location>
</feature>
<feature type="helix" evidence="4">
    <location>
        <begin position="16"/>
        <end position="18"/>
    </location>
</feature>
<feature type="helix" evidence="4">
    <location>
        <begin position="23"/>
        <end position="34"/>
    </location>
</feature>
<feature type="strand" evidence="4">
    <location>
        <begin position="41"/>
        <end position="44"/>
    </location>
</feature>
<feature type="helix" evidence="4">
    <location>
        <begin position="51"/>
        <end position="63"/>
    </location>
</feature>
<feature type="helix" evidence="4">
    <location>
        <begin position="64"/>
        <end position="70"/>
    </location>
</feature>
<feature type="strand" evidence="4">
    <location>
        <begin position="71"/>
        <end position="75"/>
    </location>
</feature>
<feature type="helix" evidence="4">
    <location>
        <begin position="82"/>
        <end position="93"/>
    </location>
</feature>
<feature type="strand" evidence="5">
    <location>
        <begin position="98"/>
        <end position="100"/>
    </location>
</feature>
<feature type="strand" evidence="4">
    <location>
        <begin position="104"/>
        <end position="109"/>
    </location>
</feature>
<feature type="helix" evidence="4">
    <location>
        <begin position="111"/>
        <end position="113"/>
    </location>
</feature>
<feature type="helix" evidence="4">
    <location>
        <begin position="116"/>
        <end position="128"/>
    </location>
</feature>
<feature type="turn" evidence="4">
    <location>
        <begin position="129"/>
        <end position="132"/>
    </location>
</feature>
<feature type="strand" evidence="4">
    <location>
        <begin position="133"/>
        <end position="140"/>
    </location>
</feature>
<feature type="helix" evidence="4">
    <location>
        <begin position="142"/>
        <end position="144"/>
    </location>
</feature>
<feature type="helix" evidence="4">
    <location>
        <begin position="147"/>
        <end position="150"/>
    </location>
</feature>
<feature type="strand" evidence="4">
    <location>
        <begin position="153"/>
        <end position="157"/>
    </location>
</feature>
<feature type="helix" evidence="4">
    <location>
        <begin position="163"/>
        <end position="177"/>
    </location>
</feature>
<feature type="helix" evidence="4">
    <location>
        <begin position="183"/>
        <end position="193"/>
    </location>
</feature>
<feature type="helix" evidence="4">
    <location>
        <begin position="197"/>
        <end position="209"/>
    </location>
</feature>
<feature type="strand" evidence="5">
    <location>
        <begin position="210"/>
        <end position="212"/>
    </location>
</feature>
<feature type="helix" evidence="4">
    <location>
        <begin position="216"/>
        <end position="224"/>
    </location>
</feature>
<feature type="helix" evidence="5">
    <location>
        <begin position="228"/>
        <end position="240"/>
    </location>
</feature>
<feature type="helix" evidence="5">
    <location>
        <begin position="243"/>
        <end position="256"/>
    </location>
</feature>
<feature type="helix" evidence="5">
    <location>
        <begin position="261"/>
        <end position="273"/>
    </location>
</feature>
<feature type="helix" evidence="5">
    <location>
        <begin position="281"/>
        <end position="297"/>
    </location>
</feature>
<feature type="helix" evidence="5">
    <location>
        <begin position="302"/>
        <end position="315"/>
    </location>
</feature>
<proteinExistence type="evidence at protein level"/>
<gene>
    <name type="primary">rfcS</name>
    <name type="ordered locus">AF_2060</name>
</gene>